<organism>
    <name type="scientific">Actinobacillus pleuropneumoniae serotype 3 (strain JL03)</name>
    <dbReference type="NCBI Taxonomy" id="434271"/>
    <lineage>
        <taxon>Bacteria</taxon>
        <taxon>Pseudomonadati</taxon>
        <taxon>Pseudomonadota</taxon>
        <taxon>Gammaproteobacteria</taxon>
        <taxon>Pasteurellales</taxon>
        <taxon>Pasteurellaceae</taxon>
        <taxon>Actinobacillus</taxon>
    </lineage>
</organism>
<name>ATPA_ACTPJ</name>
<accession>B0BRX4</accession>
<reference key="1">
    <citation type="journal article" date="2008" name="PLoS ONE">
        <title>Genome biology of Actinobacillus pleuropneumoniae JL03, an isolate of serotype 3 prevalent in China.</title>
        <authorList>
            <person name="Xu Z."/>
            <person name="Zhou Y."/>
            <person name="Li L."/>
            <person name="Zhou R."/>
            <person name="Xiao S."/>
            <person name="Wan Y."/>
            <person name="Zhang S."/>
            <person name="Wang K."/>
            <person name="Li W."/>
            <person name="Li L."/>
            <person name="Jin H."/>
            <person name="Kang M."/>
            <person name="Dalai B."/>
            <person name="Li T."/>
            <person name="Liu L."/>
            <person name="Cheng Y."/>
            <person name="Zhang L."/>
            <person name="Xu T."/>
            <person name="Zheng H."/>
            <person name="Pu S."/>
            <person name="Wang B."/>
            <person name="Gu W."/>
            <person name="Zhang X.L."/>
            <person name="Zhu G.-F."/>
            <person name="Wang S."/>
            <person name="Zhao G.-P."/>
            <person name="Chen H."/>
        </authorList>
    </citation>
    <scope>NUCLEOTIDE SEQUENCE [LARGE SCALE GENOMIC DNA]</scope>
    <source>
        <strain>JL03</strain>
    </source>
</reference>
<evidence type="ECO:0000255" key="1">
    <source>
        <dbReference type="HAMAP-Rule" id="MF_01346"/>
    </source>
</evidence>
<feature type="chain" id="PRO_1000143335" description="ATP synthase subunit alpha">
    <location>
        <begin position="1"/>
        <end position="513"/>
    </location>
</feature>
<feature type="binding site" evidence="1">
    <location>
        <begin position="169"/>
        <end position="176"/>
    </location>
    <ligand>
        <name>ATP</name>
        <dbReference type="ChEBI" id="CHEBI:30616"/>
    </ligand>
</feature>
<feature type="site" description="Required for activity" evidence="1">
    <location>
        <position position="373"/>
    </location>
</feature>
<keyword id="KW-0066">ATP synthesis</keyword>
<keyword id="KW-0067">ATP-binding</keyword>
<keyword id="KW-0997">Cell inner membrane</keyword>
<keyword id="KW-1003">Cell membrane</keyword>
<keyword id="KW-0139">CF(1)</keyword>
<keyword id="KW-0375">Hydrogen ion transport</keyword>
<keyword id="KW-0406">Ion transport</keyword>
<keyword id="KW-0472">Membrane</keyword>
<keyword id="KW-0547">Nucleotide-binding</keyword>
<keyword id="KW-1278">Translocase</keyword>
<keyword id="KW-0813">Transport</keyword>
<dbReference type="EC" id="7.1.2.2" evidence="1"/>
<dbReference type="EMBL" id="CP000687">
    <property type="protein sequence ID" value="ABY70233.1"/>
    <property type="molecule type" value="Genomic_DNA"/>
</dbReference>
<dbReference type="RefSeq" id="WP_012263332.1">
    <property type="nucleotide sequence ID" value="NC_010278.1"/>
</dbReference>
<dbReference type="SMR" id="B0BRX4"/>
<dbReference type="KEGG" id="apj:APJL_1681"/>
<dbReference type="HOGENOM" id="CLU_010091_2_1_6"/>
<dbReference type="Proteomes" id="UP000008547">
    <property type="component" value="Chromosome"/>
</dbReference>
<dbReference type="GO" id="GO:0005886">
    <property type="term" value="C:plasma membrane"/>
    <property type="evidence" value="ECO:0007669"/>
    <property type="project" value="UniProtKB-SubCell"/>
</dbReference>
<dbReference type="GO" id="GO:0045259">
    <property type="term" value="C:proton-transporting ATP synthase complex"/>
    <property type="evidence" value="ECO:0007669"/>
    <property type="project" value="UniProtKB-KW"/>
</dbReference>
<dbReference type="GO" id="GO:0043531">
    <property type="term" value="F:ADP binding"/>
    <property type="evidence" value="ECO:0007669"/>
    <property type="project" value="TreeGrafter"/>
</dbReference>
<dbReference type="GO" id="GO:0005524">
    <property type="term" value="F:ATP binding"/>
    <property type="evidence" value="ECO:0007669"/>
    <property type="project" value="UniProtKB-UniRule"/>
</dbReference>
<dbReference type="GO" id="GO:0046933">
    <property type="term" value="F:proton-transporting ATP synthase activity, rotational mechanism"/>
    <property type="evidence" value="ECO:0007669"/>
    <property type="project" value="UniProtKB-UniRule"/>
</dbReference>
<dbReference type="CDD" id="cd18113">
    <property type="entry name" value="ATP-synt_F1_alpha_C"/>
    <property type="match status" value="1"/>
</dbReference>
<dbReference type="CDD" id="cd18116">
    <property type="entry name" value="ATP-synt_F1_alpha_N"/>
    <property type="match status" value="1"/>
</dbReference>
<dbReference type="CDD" id="cd01132">
    <property type="entry name" value="F1-ATPase_alpha_CD"/>
    <property type="match status" value="1"/>
</dbReference>
<dbReference type="FunFam" id="1.20.150.20:FF:000001">
    <property type="entry name" value="ATP synthase subunit alpha"/>
    <property type="match status" value="1"/>
</dbReference>
<dbReference type="FunFam" id="2.40.30.20:FF:000001">
    <property type="entry name" value="ATP synthase subunit alpha"/>
    <property type="match status" value="1"/>
</dbReference>
<dbReference type="FunFam" id="3.40.50.300:FF:000002">
    <property type="entry name" value="ATP synthase subunit alpha"/>
    <property type="match status" value="1"/>
</dbReference>
<dbReference type="Gene3D" id="2.40.30.20">
    <property type="match status" value="1"/>
</dbReference>
<dbReference type="Gene3D" id="1.20.150.20">
    <property type="entry name" value="ATP synthase alpha/beta chain, C-terminal domain"/>
    <property type="match status" value="1"/>
</dbReference>
<dbReference type="Gene3D" id="3.40.50.300">
    <property type="entry name" value="P-loop containing nucleotide triphosphate hydrolases"/>
    <property type="match status" value="1"/>
</dbReference>
<dbReference type="HAMAP" id="MF_01346">
    <property type="entry name" value="ATP_synth_alpha_bact"/>
    <property type="match status" value="1"/>
</dbReference>
<dbReference type="InterPro" id="IPR023366">
    <property type="entry name" value="ATP_synth_asu-like_sf"/>
</dbReference>
<dbReference type="InterPro" id="IPR000793">
    <property type="entry name" value="ATP_synth_asu_C"/>
</dbReference>
<dbReference type="InterPro" id="IPR038376">
    <property type="entry name" value="ATP_synth_asu_C_sf"/>
</dbReference>
<dbReference type="InterPro" id="IPR033732">
    <property type="entry name" value="ATP_synth_F1_a_nt-bd_dom"/>
</dbReference>
<dbReference type="InterPro" id="IPR005294">
    <property type="entry name" value="ATP_synth_F1_asu"/>
</dbReference>
<dbReference type="InterPro" id="IPR020003">
    <property type="entry name" value="ATPase_a/bsu_AS"/>
</dbReference>
<dbReference type="InterPro" id="IPR004100">
    <property type="entry name" value="ATPase_F1/V1/A1_a/bsu_N"/>
</dbReference>
<dbReference type="InterPro" id="IPR036121">
    <property type="entry name" value="ATPase_F1/V1/A1_a/bsu_N_sf"/>
</dbReference>
<dbReference type="InterPro" id="IPR000194">
    <property type="entry name" value="ATPase_F1/V1/A1_a/bsu_nucl-bd"/>
</dbReference>
<dbReference type="InterPro" id="IPR027417">
    <property type="entry name" value="P-loop_NTPase"/>
</dbReference>
<dbReference type="NCBIfam" id="TIGR00962">
    <property type="entry name" value="atpA"/>
    <property type="match status" value="1"/>
</dbReference>
<dbReference type="NCBIfam" id="NF009884">
    <property type="entry name" value="PRK13343.1"/>
    <property type="match status" value="1"/>
</dbReference>
<dbReference type="PANTHER" id="PTHR48082">
    <property type="entry name" value="ATP SYNTHASE SUBUNIT ALPHA, MITOCHONDRIAL"/>
    <property type="match status" value="1"/>
</dbReference>
<dbReference type="PANTHER" id="PTHR48082:SF2">
    <property type="entry name" value="ATP SYNTHASE SUBUNIT ALPHA, MITOCHONDRIAL"/>
    <property type="match status" value="1"/>
</dbReference>
<dbReference type="Pfam" id="PF00006">
    <property type="entry name" value="ATP-synt_ab"/>
    <property type="match status" value="1"/>
</dbReference>
<dbReference type="Pfam" id="PF00306">
    <property type="entry name" value="ATP-synt_ab_C"/>
    <property type="match status" value="1"/>
</dbReference>
<dbReference type="Pfam" id="PF02874">
    <property type="entry name" value="ATP-synt_ab_N"/>
    <property type="match status" value="1"/>
</dbReference>
<dbReference type="PIRSF" id="PIRSF039088">
    <property type="entry name" value="F_ATPase_subunit_alpha"/>
    <property type="match status" value="1"/>
</dbReference>
<dbReference type="SUPFAM" id="SSF47917">
    <property type="entry name" value="C-terminal domain of alpha and beta subunits of F1 ATP synthase"/>
    <property type="match status" value="1"/>
</dbReference>
<dbReference type="SUPFAM" id="SSF50615">
    <property type="entry name" value="N-terminal domain of alpha and beta subunits of F1 ATP synthase"/>
    <property type="match status" value="1"/>
</dbReference>
<dbReference type="SUPFAM" id="SSF52540">
    <property type="entry name" value="P-loop containing nucleoside triphosphate hydrolases"/>
    <property type="match status" value="1"/>
</dbReference>
<dbReference type="PROSITE" id="PS00152">
    <property type="entry name" value="ATPASE_ALPHA_BETA"/>
    <property type="match status" value="1"/>
</dbReference>
<proteinExistence type="inferred from homology"/>
<comment type="function">
    <text evidence="1">Produces ATP from ADP in the presence of a proton gradient across the membrane. The alpha chain is a regulatory subunit.</text>
</comment>
<comment type="catalytic activity">
    <reaction evidence="1">
        <text>ATP + H2O + 4 H(+)(in) = ADP + phosphate + 5 H(+)(out)</text>
        <dbReference type="Rhea" id="RHEA:57720"/>
        <dbReference type="ChEBI" id="CHEBI:15377"/>
        <dbReference type="ChEBI" id="CHEBI:15378"/>
        <dbReference type="ChEBI" id="CHEBI:30616"/>
        <dbReference type="ChEBI" id="CHEBI:43474"/>
        <dbReference type="ChEBI" id="CHEBI:456216"/>
        <dbReference type="EC" id="7.1.2.2"/>
    </reaction>
</comment>
<comment type="subunit">
    <text evidence="1">F-type ATPases have 2 components, CF(1) - the catalytic core - and CF(0) - the membrane proton channel. CF(1) has five subunits: alpha(3), beta(3), gamma(1), delta(1), epsilon(1). CF(0) has three main subunits: a(1), b(2) and c(9-12). The alpha and beta chains form an alternating ring which encloses part of the gamma chain. CF(1) is attached to CF(0) by a central stalk formed by the gamma and epsilon chains, while a peripheral stalk is formed by the delta and b chains.</text>
</comment>
<comment type="subcellular location">
    <subcellularLocation>
        <location evidence="1">Cell inner membrane</location>
        <topology evidence="1">Peripheral membrane protein</topology>
    </subcellularLocation>
</comment>
<comment type="similarity">
    <text evidence="1">Belongs to the ATPase alpha/beta chains family.</text>
</comment>
<protein>
    <recommendedName>
        <fullName evidence="1">ATP synthase subunit alpha</fullName>
        <ecNumber evidence="1">7.1.2.2</ecNumber>
    </recommendedName>
    <alternativeName>
        <fullName evidence="1">ATP synthase F1 sector subunit alpha</fullName>
    </alternativeName>
    <alternativeName>
        <fullName evidence="1">F-ATPase subunit alpha</fullName>
    </alternativeName>
</protein>
<gene>
    <name evidence="1" type="primary">atpA</name>
    <name type="ordered locus">APJL_1681</name>
</gene>
<sequence>MQLNSTEISELIKKRIAQFDVVSEAQSTGTIVSVSDGIIRIHGLADVMQGEMIELPGNRYAIALNLERDSVGAVVMGPYADLAEGMSVKCTGRILEVPVGRGLLGRVVNTLGQPIDGKGEIDNDGFSPVEVIAPGVIDRQSVDQPVQTGYKAVDSMVPIGRGQRELIIGDRQTGKTALAIDAIIAQKDSGIKCIYVAIGQKASTIANVVRKLEEHGALANTIVVVASASESAALQYLAPYSGCAMGEYFRDRGEDALIVYDDLSKQAVAYRQISLLLRRPPGREAFPGDVFYLHSRLLERAARVSADYVERFTNGAVKGQTGSLTALPIIETQAGDVSAFVPTNVISITDGQIFLESSLFNSGIRPAVNPGISVSRVGSAAQTKAIKKLSGGIRTALAQYRELAAFAQFASDLDDATRKQLSHGQKVTELLKQKQFAPMPVSEQALVLFAAEFGYLDDVELERIGSFESALLAYANSNHTDFMKNLAKSGDYNDSIKDQLKTIVEDFKKNGAW</sequence>